<reference key="1">
    <citation type="journal article" date="2009" name="J. Bacteriol.">
        <title>The genome of Thermosipho africanus TCF52B: lateral genetic connections to the Firmicutes and Archaea.</title>
        <authorList>
            <person name="Nesboe C.L."/>
            <person name="Bapteste E."/>
            <person name="Curtis B."/>
            <person name="Dahle H."/>
            <person name="Lopez P."/>
            <person name="Macleod D."/>
            <person name="Dlutek M."/>
            <person name="Bowman S."/>
            <person name="Zhaxybayeva O."/>
            <person name="Birkeland N.-K."/>
            <person name="Doolittle W.F."/>
        </authorList>
    </citation>
    <scope>NUCLEOTIDE SEQUENCE [LARGE SCALE GENOMIC DNA]</scope>
    <source>
        <strain>TCF52B</strain>
    </source>
</reference>
<name>TSAD_THEAB</name>
<dbReference type="EC" id="2.3.1.234" evidence="1"/>
<dbReference type="EMBL" id="CP001185">
    <property type="protein sequence ID" value="ACJ75128.1"/>
    <property type="molecule type" value="Genomic_DNA"/>
</dbReference>
<dbReference type="RefSeq" id="WP_012579701.1">
    <property type="nucleotide sequence ID" value="NC_011653.1"/>
</dbReference>
<dbReference type="SMR" id="B7IGB4"/>
<dbReference type="STRING" id="484019.THA_650"/>
<dbReference type="KEGG" id="taf:THA_650"/>
<dbReference type="eggNOG" id="COG0533">
    <property type="taxonomic scope" value="Bacteria"/>
</dbReference>
<dbReference type="HOGENOM" id="CLU_023208_0_2_0"/>
<dbReference type="OrthoDB" id="9806197at2"/>
<dbReference type="Proteomes" id="UP000002453">
    <property type="component" value="Chromosome"/>
</dbReference>
<dbReference type="GO" id="GO:0005737">
    <property type="term" value="C:cytoplasm"/>
    <property type="evidence" value="ECO:0007669"/>
    <property type="project" value="UniProtKB-SubCell"/>
</dbReference>
<dbReference type="GO" id="GO:0005506">
    <property type="term" value="F:iron ion binding"/>
    <property type="evidence" value="ECO:0007669"/>
    <property type="project" value="UniProtKB-UniRule"/>
</dbReference>
<dbReference type="GO" id="GO:0061711">
    <property type="term" value="F:N(6)-L-threonylcarbamoyladenine synthase activity"/>
    <property type="evidence" value="ECO:0007669"/>
    <property type="project" value="UniProtKB-EC"/>
</dbReference>
<dbReference type="GO" id="GO:0002949">
    <property type="term" value="P:tRNA threonylcarbamoyladenosine modification"/>
    <property type="evidence" value="ECO:0007669"/>
    <property type="project" value="UniProtKB-UniRule"/>
</dbReference>
<dbReference type="CDD" id="cd24133">
    <property type="entry name" value="ASKHA_NBD_TsaD_bac"/>
    <property type="match status" value="1"/>
</dbReference>
<dbReference type="FunFam" id="3.30.420.40:FF:000012">
    <property type="entry name" value="tRNA N6-adenosine threonylcarbamoyltransferase"/>
    <property type="match status" value="1"/>
</dbReference>
<dbReference type="FunFam" id="3.30.420.40:FF:000040">
    <property type="entry name" value="tRNA N6-adenosine threonylcarbamoyltransferase"/>
    <property type="match status" value="1"/>
</dbReference>
<dbReference type="Gene3D" id="3.30.420.40">
    <property type="match status" value="2"/>
</dbReference>
<dbReference type="HAMAP" id="MF_01445">
    <property type="entry name" value="TsaD"/>
    <property type="match status" value="1"/>
</dbReference>
<dbReference type="InterPro" id="IPR043129">
    <property type="entry name" value="ATPase_NBD"/>
</dbReference>
<dbReference type="InterPro" id="IPR000905">
    <property type="entry name" value="Gcp-like_dom"/>
</dbReference>
<dbReference type="InterPro" id="IPR017861">
    <property type="entry name" value="KAE1/TsaD"/>
</dbReference>
<dbReference type="InterPro" id="IPR017860">
    <property type="entry name" value="Peptidase_M22_CS"/>
</dbReference>
<dbReference type="InterPro" id="IPR022450">
    <property type="entry name" value="TsaD"/>
</dbReference>
<dbReference type="NCBIfam" id="TIGR00329">
    <property type="entry name" value="gcp_kae1"/>
    <property type="match status" value="1"/>
</dbReference>
<dbReference type="NCBIfam" id="TIGR03723">
    <property type="entry name" value="T6A_TsaD_YgjD"/>
    <property type="match status" value="1"/>
</dbReference>
<dbReference type="PANTHER" id="PTHR11735">
    <property type="entry name" value="TRNA N6-ADENOSINE THREONYLCARBAMOYLTRANSFERASE"/>
    <property type="match status" value="1"/>
</dbReference>
<dbReference type="PANTHER" id="PTHR11735:SF6">
    <property type="entry name" value="TRNA N6-ADENOSINE THREONYLCARBAMOYLTRANSFERASE, MITOCHONDRIAL"/>
    <property type="match status" value="1"/>
</dbReference>
<dbReference type="Pfam" id="PF00814">
    <property type="entry name" value="TsaD"/>
    <property type="match status" value="1"/>
</dbReference>
<dbReference type="PRINTS" id="PR00789">
    <property type="entry name" value="OSIALOPTASE"/>
</dbReference>
<dbReference type="SUPFAM" id="SSF53067">
    <property type="entry name" value="Actin-like ATPase domain"/>
    <property type="match status" value="2"/>
</dbReference>
<dbReference type="PROSITE" id="PS01016">
    <property type="entry name" value="GLYCOPROTEASE"/>
    <property type="match status" value="1"/>
</dbReference>
<keyword id="KW-0012">Acyltransferase</keyword>
<keyword id="KW-0963">Cytoplasm</keyword>
<keyword id="KW-0408">Iron</keyword>
<keyword id="KW-0479">Metal-binding</keyword>
<keyword id="KW-1185">Reference proteome</keyword>
<keyword id="KW-0808">Transferase</keyword>
<keyword id="KW-0819">tRNA processing</keyword>
<sequence>MIVLGIETSCDETSVAILSDGKILSNVVSSQIDIHKKFGGVVPEIAARHHLSNLPIVFKNAIDMANISIDQIDLISVTYGPGLIGALLVGISFAKGLSLRLGKPLIGVNHIVGHVFANYITYPHLKPPYIVLMVSGGHTEILLVKQDDEIEVLGKTVDDAAGEAFDKVARILGLGYPGGPEIDKLSKNGDENKFNFPRPMMDSKSYNFSFSGLKTAVLYTVQKFDKDNVPKEDIAASFQKAVVEILLKKTFKAAKDLNVNTIVLAGGVAANSYLRKKAQKLSEKQNIKVLIPPLEFCTDNAAMIAMAGYKLYKKGISSDSTLEAVPNLKI</sequence>
<feature type="chain" id="PRO_1000146034" description="tRNA N6-adenosine threonylcarbamoyltransferase">
    <location>
        <begin position="1"/>
        <end position="330"/>
    </location>
</feature>
<feature type="binding site" evidence="1">
    <location>
        <position position="110"/>
    </location>
    <ligand>
        <name>Fe cation</name>
        <dbReference type="ChEBI" id="CHEBI:24875"/>
    </ligand>
</feature>
<feature type="binding site" evidence="1">
    <location>
        <position position="114"/>
    </location>
    <ligand>
        <name>Fe cation</name>
        <dbReference type="ChEBI" id="CHEBI:24875"/>
    </ligand>
</feature>
<feature type="binding site" evidence="1">
    <location>
        <begin position="133"/>
        <end position="137"/>
    </location>
    <ligand>
        <name>substrate</name>
    </ligand>
</feature>
<feature type="binding site" evidence="1">
    <location>
        <position position="166"/>
    </location>
    <ligand>
        <name>substrate</name>
    </ligand>
</feature>
<feature type="binding site" evidence="1">
    <location>
        <position position="179"/>
    </location>
    <ligand>
        <name>substrate</name>
    </ligand>
</feature>
<feature type="binding site" evidence="1">
    <location>
        <position position="183"/>
    </location>
    <ligand>
        <name>substrate</name>
    </ligand>
</feature>
<feature type="binding site" evidence="1">
    <location>
        <position position="271"/>
    </location>
    <ligand>
        <name>substrate</name>
    </ligand>
</feature>
<feature type="binding site" evidence="1">
    <location>
        <position position="299"/>
    </location>
    <ligand>
        <name>Fe cation</name>
        <dbReference type="ChEBI" id="CHEBI:24875"/>
    </ligand>
</feature>
<organism>
    <name type="scientific">Thermosipho africanus (strain TCF52B)</name>
    <dbReference type="NCBI Taxonomy" id="484019"/>
    <lineage>
        <taxon>Bacteria</taxon>
        <taxon>Thermotogati</taxon>
        <taxon>Thermotogota</taxon>
        <taxon>Thermotogae</taxon>
        <taxon>Thermotogales</taxon>
        <taxon>Fervidobacteriaceae</taxon>
        <taxon>Thermosipho</taxon>
    </lineage>
</organism>
<gene>
    <name evidence="1" type="primary">tsaD</name>
    <name type="synonym">gcp</name>
    <name type="ordered locus">THA_650</name>
</gene>
<evidence type="ECO:0000255" key="1">
    <source>
        <dbReference type="HAMAP-Rule" id="MF_01445"/>
    </source>
</evidence>
<proteinExistence type="inferred from homology"/>
<comment type="function">
    <text evidence="1">Required for the formation of a threonylcarbamoyl group on adenosine at position 37 (t(6)A37) in tRNAs that read codons beginning with adenine. Is involved in the transfer of the threonylcarbamoyl moiety of threonylcarbamoyl-AMP (TC-AMP) to the N6 group of A37, together with TsaE and TsaB. TsaD likely plays a direct catalytic role in this reaction.</text>
</comment>
<comment type="catalytic activity">
    <reaction evidence="1">
        <text>L-threonylcarbamoyladenylate + adenosine(37) in tRNA = N(6)-L-threonylcarbamoyladenosine(37) in tRNA + AMP + H(+)</text>
        <dbReference type="Rhea" id="RHEA:37059"/>
        <dbReference type="Rhea" id="RHEA-COMP:10162"/>
        <dbReference type="Rhea" id="RHEA-COMP:10163"/>
        <dbReference type="ChEBI" id="CHEBI:15378"/>
        <dbReference type="ChEBI" id="CHEBI:73682"/>
        <dbReference type="ChEBI" id="CHEBI:74411"/>
        <dbReference type="ChEBI" id="CHEBI:74418"/>
        <dbReference type="ChEBI" id="CHEBI:456215"/>
        <dbReference type="EC" id="2.3.1.234"/>
    </reaction>
</comment>
<comment type="cofactor">
    <cofactor evidence="1">
        <name>Fe(2+)</name>
        <dbReference type="ChEBI" id="CHEBI:29033"/>
    </cofactor>
    <text evidence="1">Binds 1 Fe(2+) ion per subunit.</text>
</comment>
<comment type="subcellular location">
    <subcellularLocation>
        <location evidence="1">Cytoplasm</location>
    </subcellularLocation>
</comment>
<comment type="similarity">
    <text evidence="1">Belongs to the KAE1 / TsaD family.</text>
</comment>
<accession>B7IGB4</accession>
<protein>
    <recommendedName>
        <fullName evidence="1">tRNA N6-adenosine threonylcarbamoyltransferase</fullName>
        <ecNumber evidence="1">2.3.1.234</ecNumber>
    </recommendedName>
    <alternativeName>
        <fullName evidence="1">N6-L-threonylcarbamoyladenine synthase</fullName>
        <shortName evidence="1">t(6)A synthase</shortName>
    </alternativeName>
    <alternativeName>
        <fullName evidence="1">t(6)A37 threonylcarbamoyladenosine biosynthesis protein TsaD</fullName>
    </alternativeName>
    <alternativeName>
        <fullName evidence="1">tRNA threonylcarbamoyladenosine biosynthesis protein TsaD</fullName>
    </alternativeName>
</protein>